<reference key="1">
    <citation type="submission" date="2004-07" db="EMBL/GenBank/DDBJ databases">
        <authorList>
            <consortium name="NIH - Xenopus Gene Collection (XGC) project"/>
        </authorList>
    </citation>
    <scope>NUCLEOTIDE SEQUENCE [LARGE SCALE MRNA]</scope>
    <source>
        <tissue>Oocyte</tissue>
    </source>
</reference>
<protein>
    <recommendedName>
        <fullName>Integrator complex subunit 9</fullName>
        <shortName>Int9</shortName>
    </recommendedName>
</protein>
<organism>
    <name type="scientific">Xenopus laevis</name>
    <name type="common">African clawed frog</name>
    <dbReference type="NCBI Taxonomy" id="8355"/>
    <lineage>
        <taxon>Eukaryota</taxon>
        <taxon>Metazoa</taxon>
        <taxon>Chordata</taxon>
        <taxon>Craniata</taxon>
        <taxon>Vertebrata</taxon>
        <taxon>Euteleostomi</taxon>
        <taxon>Amphibia</taxon>
        <taxon>Batrachia</taxon>
        <taxon>Anura</taxon>
        <taxon>Pipoidea</taxon>
        <taxon>Pipidae</taxon>
        <taxon>Xenopodinae</taxon>
        <taxon>Xenopus</taxon>
        <taxon>Xenopus</taxon>
    </lineage>
</organism>
<accession>Q6DFF4</accession>
<evidence type="ECO:0000250" key="1">
    <source>
        <dbReference type="UniProtKB" id="Q9NV88"/>
    </source>
</evidence>
<evidence type="ECO:0000256" key="2">
    <source>
        <dbReference type="SAM" id="MobiDB-lite"/>
    </source>
</evidence>
<evidence type="ECO:0000305" key="3"/>
<keyword id="KW-0963">Cytoplasm</keyword>
<keyword id="KW-0539">Nucleus</keyword>
<keyword id="KW-1185">Reference proteome</keyword>
<gene>
    <name type="primary">ints9</name>
</gene>
<sequence length="658" mass="74077">MKLYCLSGHPTLPCNILKFKSSTIMLDCGLDMTSTLSFLPLPLVHSTRLSKLPGWVTKDGNNQFEKELKECSGRVFVDSVPEFCLPETELIDLSTVDVILISNYHCMMALPYITERTGFTGTVYATEPTVQIGRLLMEELVNFIERVPKAQSATVWKHKDVQRLLPAPLKDAVEVFTWKKCYSMQEVNAALSKIQLVGYSQKIELFGVVQVTPLSSGYALGSSNWVIQSHYEKVSYVSGSSLLTTHPQPMDQTSLKNSDVLILTGLTQIPTANPDGMVGEFCSNLAMTIRSGGNVLVPCYPSGVIYDLLECLYQYIDSAGLSNVPFYFISPVANSSLEFSQIFAEWLCHNKQNKVYLPEPPFPHAELIQSNKLKHYPNIHGDFSNDFKQPCVVFTGHPTLRFGDVVHFMELWGKSSLNTVIFTEPDFSYLDALAPYQPLAMKCVYCPIDTRLNFIQVTKLLKEVQPLHVVCPEQYTQPPATQSHRSDLMIDCQPPPMSYHRAEVLTLPFKRRYEKIEIMPELAQSLVPFEMKPGVSLATVSAVLHSKDNKHVLQPPPKPVAPPGSKKRKRPAEESPETPPFKPLLSGSIPVEQFVQTLEKNGFSDVKIEDTAKGHIVHLQEAETLIQFEEDSTHIICEHDERLRVRLRDLVLKFLQKF</sequence>
<proteinExistence type="evidence at transcript level"/>
<name>INT9_XENLA</name>
<feature type="chain" id="PRO_0000259561" description="Integrator complex subunit 9">
    <location>
        <begin position="1"/>
        <end position="658"/>
    </location>
</feature>
<feature type="region of interest" description="Disordered" evidence="2">
    <location>
        <begin position="547"/>
        <end position="586"/>
    </location>
</feature>
<feature type="short sequence motif" description="Nuclear localization signal" evidence="1">
    <location>
        <begin position="566"/>
        <end position="570"/>
    </location>
</feature>
<comment type="function">
    <text evidence="1">Component of the integrator complex, a multiprotein complex that terminates RNA polymerase II (Pol II) transcription in the promoter-proximal region of genes. The integrator complex provides a quality checkpoint during transcription elongation by driving premature transcription termination of transcripts that are unfavorably configured for transcriptional elongation: the complex terminates transcription by (1) catalyzing dephosphorylation of the C-terminal domain (CTD) of Pol II subunit POLR2A/RPB1 and SUPT5H/SPT5, (2) degrading the exiting nascent RNA transcript via endonuclease activity and (3) promoting the release of Pol II from bound DNA. The integrator complex is also involved in terminating the synthesis of non-coding Pol II transcripts, such as enhancer RNAs (eRNAs), small nuclear RNAs (snRNAs), telomerase RNAs and long non-coding RNAs (lncRNAs).</text>
</comment>
<comment type="subunit">
    <text evidence="1">Component of the Integrator complex, composed of core subunits INTS1, INTS2, INTS3, INTS4, INTS5, INTS6, INTS7, INTS8, INTS9/RC74, INTS10, INTS11/CPSF3L, INTS12, INTS13, INTS14 and INTS15. The core complex associates with protein phosphatase 2A subunits PPP2CA and PPP2R1A, to form the Integrator-PP2A (INTAC) complex. INTS9 is part of the RNA endonuclease subcomplex, composed of INTS4, INTS9, INTS11 and inositol hexakisphosphate (InsP6).</text>
</comment>
<comment type="subcellular location">
    <subcellularLocation>
        <location evidence="1">Nucleus</location>
    </subcellularLocation>
    <subcellularLocation>
        <location evidence="1">Cytoplasm</location>
    </subcellularLocation>
</comment>
<comment type="miscellaneous">
    <text>Although strongly related to RNA-specific endonuclease proteins, it lacks the HXHXDH motif that binds zinc and participates in the catalytic center. Its function as endonuclease is therefore unsure.</text>
</comment>
<comment type="similarity">
    <text evidence="3">Belongs to the metallo-beta-lactamase superfamily. RNA-metabolizing metallo-beta-lactamase-like family. INTS9 subfamily.</text>
</comment>
<dbReference type="EMBL" id="BC076784">
    <property type="protein sequence ID" value="AAH76784.1"/>
    <property type="molecule type" value="mRNA"/>
</dbReference>
<dbReference type="RefSeq" id="NP_001086545.1">
    <property type="nucleotide sequence ID" value="NM_001093076.1"/>
</dbReference>
<dbReference type="SMR" id="Q6DFF4"/>
<dbReference type="DNASU" id="446380"/>
<dbReference type="GeneID" id="446380"/>
<dbReference type="KEGG" id="xla:446380"/>
<dbReference type="AGR" id="Xenbase:XB-GENE-6251479"/>
<dbReference type="CTD" id="446380"/>
<dbReference type="Xenbase" id="XB-GENE-6251479">
    <property type="gene designation" value="ints9.S"/>
</dbReference>
<dbReference type="OrthoDB" id="5600060at2759"/>
<dbReference type="Proteomes" id="UP000186698">
    <property type="component" value="Chromosome 5S"/>
</dbReference>
<dbReference type="Bgee" id="446380">
    <property type="expression patterns" value="Expressed in oocyte and 20 other cell types or tissues"/>
</dbReference>
<dbReference type="GO" id="GO:0005737">
    <property type="term" value="C:cytoplasm"/>
    <property type="evidence" value="ECO:0000250"/>
    <property type="project" value="UniProtKB"/>
</dbReference>
<dbReference type="GO" id="GO:0160232">
    <property type="term" value="C:INTAC complex"/>
    <property type="evidence" value="ECO:0000250"/>
    <property type="project" value="UniProtKB"/>
</dbReference>
<dbReference type="GO" id="GO:0032039">
    <property type="term" value="C:integrator complex"/>
    <property type="evidence" value="ECO:0000250"/>
    <property type="project" value="UniProtKB"/>
</dbReference>
<dbReference type="GO" id="GO:0005634">
    <property type="term" value="C:nucleus"/>
    <property type="evidence" value="ECO:0000250"/>
    <property type="project" value="UniProtKB"/>
</dbReference>
<dbReference type="GO" id="GO:0160240">
    <property type="term" value="P:RNA polymerase II transcription initiation surveillance"/>
    <property type="evidence" value="ECO:0000250"/>
    <property type="project" value="UniProtKB"/>
</dbReference>
<dbReference type="GO" id="GO:0034472">
    <property type="term" value="P:snRNA 3'-end processing"/>
    <property type="evidence" value="ECO:0000250"/>
    <property type="project" value="UniProtKB"/>
</dbReference>
<dbReference type="CDD" id="cd16294">
    <property type="entry name" value="Int9-like_MBL-fold"/>
    <property type="match status" value="1"/>
</dbReference>
<dbReference type="FunFam" id="3.40.50.10890:FF:000003">
    <property type="entry name" value="Integrator complex subunit 9"/>
    <property type="match status" value="1"/>
</dbReference>
<dbReference type="Gene3D" id="3.40.50.10890">
    <property type="match status" value="1"/>
</dbReference>
<dbReference type="Gene3D" id="3.60.15.10">
    <property type="entry name" value="Ribonuclease Z/Hydroxyacylglutathione hydrolase-like"/>
    <property type="match status" value="1"/>
</dbReference>
<dbReference type="InterPro" id="IPR022712">
    <property type="entry name" value="Beta_Casp"/>
</dbReference>
<dbReference type="InterPro" id="IPR027074">
    <property type="entry name" value="Integrator_9su"/>
</dbReference>
<dbReference type="InterPro" id="IPR048660">
    <property type="entry name" value="IntS9-like_C"/>
</dbReference>
<dbReference type="InterPro" id="IPR001279">
    <property type="entry name" value="Metallo-B-lactamas"/>
</dbReference>
<dbReference type="InterPro" id="IPR036866">
    <property type="entry name" value="RibonucZ/Hydroxyglut_hydro"/>
</dbReference>
<dbReference type="PANTHER" id="PTHR46094">
    <property type="entry name" value="INTEGRATOR COMPLEX SUBUNIT 9"/>
    <property type="match status" value="1"/>
</dbReference>
<dbReference type="PANTHER" id="PTHR46094:SF1">
    <property type="entry name" value="INTEGRATOR COMPLEX SUBUNIT 9"/>
    <property type="match status" value="1"/>
</dbReference>
<dbReference type="Pfam" id="PF10996">
    <property type="entry name" value="Beta-Casp"/>
    <property type="match status" value="1"/>
</dbReference>
<dbReference type="Pfam" id="PF21382">
    <property type="entry name" value="IntS9_C"/>
    <property type="match status" value="1"/>
</dbReference>
<dbReference type="Pfam" id="PF16661">
    <property type="entry name" value="Lactamase_B_6"/>
    <property type="match status" value="1"/>
</dbReference>
<dbReference type="SMART" id="SM01027">
    <property type="entry name" value="Beta-Casp"/>
    <property type="match status" value="1"/>
</dbReference>
<dbReference type="SUPFAM" id="SSF56281">
    <property type="entry name" value="Metallo-hydrolase/oxidoreductase"/>
    <property type="match status" value="1"/>
</dbReference>